<sequence length="179" mass="21289">MKEKIISEINLDLVFQCNNFSQFSNKLKDTKTNLIFESIFWEKVFLSWINTILKNEDYELPNYIFDKKSFSLGLQIISNQEIASLNKKWMQKNGPTDVLSFPIISDESLNNLDHIELGDIFISLEMALEQSYEYKHSIYREMIWLASHGFLHLLGWEHNNEHDLENMLNFQEYLITRLD</sequence>
<reference key="1">
    <citation type="journal article" date="2007" name="PLoS Genet.">
        <title>Patterns and implications of gene gain and loss in the evolution of Prochlorococcus.</title>
        <authorList>
            <person name="Kettler G.C."/>
            <person name="Martiny A.C."/>
            <person name="Huang K."/>
            <person name="Zucker J."/>
            <person name="Coleman M.L."/>
            <person name="Rodrigue S."/>
            <person name="Chen F."/>
            <person name="Lapidus A."/>
            <person name="Ferriera S."/>
            <person name="Johnson J."/>
            <person name="Steglich C."/>
            <person name="Church G.M."/>
            <person name="Richardson P."/>
            <person name="Chisholm S.W."/>
        </authorList>
    </citation>
    <scope>NUCLEOTIDE SEQUENCE [LARGE SCALE GENOMIC DNA]</scope>
    <source>
        <strain>AS9601</strain>
    </source>
</reference>
<protein>
    <recommendedName>
        <fullName evidence="1">Endoribonuclease YbeY</fullName>
        <ecNumber evidence="1">3.1.-.-</ecNumber>
    </recommendedName>
</protein>
<accession>A2BNX7</accession>
<organism>
    <name type="scientific">Prochlorococcus marinus (strain AS9601)</name>
    <dbReference type="NCBI Taxonomy" id="146891"/>
    <lineage>
        <taxon>Bacteria</taxon>
        <taxon>Bacillati</taxon>
        <taxon>Cyanobacteriota</taxon>
        <taxon>Cyanophyceae</taxon>
        <taxon>Synechococcales</taxon>
        <taxon>Prochlorococcaceae</taxon>
        <taxon>Prochlorococcus</taxon>
    </lineage>
</organism>
<proteinExistence type="inferred from homology"/>
<keyword id="KW-0963">Cytoplasm</keyword>
<keyword id="KW-0255">Endonuclease</keyword>
<keyword id="KW-0378">Hydrolase</keyword>
<keyword id="KW-0479">Metal-binding</keyword>
<keyword id="KW-0540">Nuclease</keyword>
<keyword id="KW-0690">Ribosome biogenesis</keyword>
<keyword id="KW-0698">rRNA processing</keyword>
<keyword id="KW-0862">Zinc</keyword>
<comment type="function">
    <text evidence="1">Single strand-specific metallo-endoribonuclease involved in late-stage 70S ribosome quality control and in maturation of the 3' terminus of the 16S rRNA.</text>
</comment>
<comment type="cofactor">
    <cofactor evidence="1">
        <name>Zn(2+)</name>
        <dbReference type="ChEBI" id="CHEBI:29105"/>
    </cofactor>
    <text evidence="1">Binds 1 zinc ion.</text>
</comment>
<comment type="subcellular location">
    <subcellularLocation>
        <location evidence="1">Cytoplasm</location>
    </subcellularLocation>
</comment>
<comment type="similarity">
    <text evidence="1">Belongs to the endoribonuclease YbeY family.</text>
</comment>
<dbReference type="EC" id="3.1.-.-" evidence="1"/>
<dbReference type="EMBL" id="CP000551">
    <property type="protein sequence ID" value="ABM69488.1"/>
    <property type="molecule type" value="Genomic_DNA"/>
</dbReference>
<dbReference type="RefSeq" id="WP_011817675.1">
    <property type="nucleotide sequence ID" value="NC_008816.1"/>
</dbReference>
<dbReference type="SMR" id="A2BNX7"/>
<dbReference type="STRING" id="146891.A9601_02001"/>
<dbReference type="KEGG" id="pmb:A9601_02001"/>
<dbReference type="eggNOG" id="COG0319">
    <property type="taxonomic scope" value="Bacteria"/>
</dbReference>
<dbReference type="HOGENOM" id="CLU_106710_3_0_3"/>
<dbReference type="OrthoDB" id="9807740at2"/>
<dbReference type="Proteomes" id="UP000002590">
    <property type="component" value="Chromosome"/>
</dbReference>
<dbReference type="GO" id="GO:0005737">
    <property type="term" value="C:cytoplasm"/>
    <property type="evidence" value="ECO:0007669"/>
    <property type="project" value="UniProtKB-SubCell"/>
</dbReference>
<dbReference type="GO" id="GO:0004222">
    <property type="term" value="F:metalloendopeptidase activity"/>
    <property type="evidence" value="ECO:0007669"/>
    <property type="project" value="InterPro"/>
</dbReference>
<dbReference type="GO" id="GO:0004521">
    <property type="term" value="F:RNA endonuclease activity"/>
    <property type="evidence" value="ECO:0007669"/>
    <property type="project" value="UniProtKB-UniRule"/>
</dbReference>
<dbReference type="GO" id="GO:0008270">
    <property type="term" value="F:zinc ion binding"/>
    <property type="evidence" value="ECO:0007669"/>
    <property type="project" value="UniProtKB-UniRule"/>
</dbReference>
<dbReference type="GO" id="GO:0006364">
    <property type="term" value="P:rRNA processing"/>
    <property type="evidence" value="ECO:0007669"/>
    <property type="project" value="UniProtKB-UniRule"/>
</dbReference>
<dbReference type="Gene3D" id="3.40.390.30">
    <property type="entry name" value="Metalloproteases ('zincins'), catalytic domain"/>
    <property type="match status" value="1"/>
</dbReference>
<dbReference type="HAMAP" id="MF_00009">
    <property type="entry name" value="Endoribonucl_YbeY"/>
    <property type="match status" value="1"/>
</dbReference>
<dbReference type="InterPro" id="IPR023091">
    <property type="entry name" value="MetalPrtase_cat_dom_sf_prd"/>
</dbReference>
<dbReference type="InterPro" id="IPR002036">
    <property type="entry name" value="YbeY"/>
</dbReference>
<dbReference type="InterPro" id="IPR020549">
    <property type="entry name" value="YbeY_CS"/>
</dbReference>
<dbReference type="NCBIfam" id="TIGR00043">
    <property type="entry name" value="rRNA maturation RNase YbeY"/>
    <property type="match status" value="1"/>
</dbReference>
<dbReference type="PANTHER" id="PTHR46986">
    <property type="entry name" value="ENDORIBONUCLEASE YBEY, CHLOROPLASTIC"/>
    <property type="match status" value="1"/>
</dbReference>
<dbReference type="PANTHER" id="PTHR46986:SF1">
    <property type="entry name" value="ENDORIBONUCLEASE YBEY, CHLOROPLASTIC"/>
    <property type="match status" value="1"/>
</dbReference>
<dbReference type="Pfam" id="PF02130">
    <property type="entry name" value="YbeY"/>
    <property type="match status" value="1"/>
</dbReference>
<dbReference type="SUPFAM" id="SSF55486">
    <property type="entry name" value="Metalloproteases ('zincins'), catalytic domain"/>
    <property type="match status" value="1"/>
</dbReference>
<dbReference type="PROSITE" id="PS01306">
    <property type="entry name" value="UPF0054"/>
    <property type="match status" value="1"/>
</dbReference>
<gene>
    <name evidence="1" type="primary">ybeY</name>
    <name type="ordered locus">A9601_02001</name>
</gene>
<name>YBEY_PROMS</name>
<evidence type="ECO:0000255" key="1">
    <source>
        <dbReference type="HAMAP-Rule" id="MF_00009"/>
    </source>
</evidence>
<feature type="chain" id="PRO_0000284269" description="Endoribonuclease YbeY">
    <location>
        <begin position="1"/>
        <end position="179"/>
    </location>
</feature>
<feature type="binding site" evidence="1">
    <location>
        <position position="148"/>
    </location>
    <ligand>
        <name>Zn(2+)</name>
        <dbReference type="ChEBI" id="CHEBI:29105"/>
        <note>catalytic</note>
    </ligand>
</feature>
<feature type="binding site" evidence="1">
    <location>
        <position position="152"/>
    </location>
    <ligand>
        <name>Zn(2+)</name>
        <dbReference type="ChEBI" id="CHEBI:29105"/>
        <note>catalytic</note>
    </ligand>
</feature>
<feature type="binding site" evidence="1">
    <location>
        <position position="158"/>
    </location>
    <ligand>
        <name>Zn(2+)</name>
        <dbReference type="ChEBI" id="CHEBI:29105"/>
        <note>catalytic</note>
    </ligand>
</feature>